<comment type="function">
    <text>Involved in oxygen transport from the lung to the various peripheral tissues.</text>
</comment>
<comment type="function">
    <molecule>Hemopressin</molecule>
    <text evidence="2">Hemopressin acts as an antagonist peptide of the cannabinoid receptor CNR1. Hemopressin-binding efficiently blocks cannabinoid receptor CNR1 and subsequent signaling.</text>
</comment>
<comment type="subunit">
    <text>Heterotetramer of two alpha chains and two beta chains.</text>
</comment>
<comment type="tissue specificity">
    <text>Red blood cells.</text>
</comment>
<comment type="similarity">
    <text evidence="4">Belongs to the globin family.</text>
</comment>
<proteinExistence type="evidence at protein level"/>
<feature type="chain" id="PRO_0000052676" description="Hemoglobin subunit alpha">
    <location>
        <begin position="1"/>
        <end position="141"/>
    </location>
</feature>
<feature type="peptide" id="PRO_0000455896" description="Hemopressin" evidence="2">
    <location>
        <begin position="95"/>
        <end position="103"/>
    </location>
</feature>
<feature type="domain" description="Globin" evidence="4">
    <location>
        <begin position="1"/>
        <end position="141"/>
    </location>
</feature>
<feature type="binding site" evidence="4">
    <location>
        <position position="58"/>
    </location>
    <ligand>
        <name>O2</name>
        <dbReference type="ChEBI" id="CHEBI:15379"/>
    </ligand>
</feature>
<feature type="binding site" description="proximal binding residue" evidence="4">
    <location>
        <position position="87"/>
    </location>
    <ligand>
        <name>heme b</name>
        <dbReference type="ChEBI" id="CHEBI:60344"/>
    </ligand>
    <ligandPart>
        <name>Fe</name>
        <dbReference type="ChEBI" id="CHEBI:18248"/>
    </ligandPart>
</feature>
<feature type="modified residue" description="Phosphoserine" evidence="3">
    <location>
        <position position="3"/>
    </location>
</feature>
<feature type="modified residue" description="N6-succinyllysine" evidence="1">
    <location>
        <position position="7"/>
    </location>
</feature>
<feature type="modified residue" description="N6-succinyllysine" evidence="1">
    <location>
        <position position="11"/>
    </location>
</feature>
<feature type="modified residue" description="N6-acetyllysine; alternate" evidence="3">
    <location>
        <position position="16"/>
    </location>
</feature>
<feature type="modified residue" description="N6-succinyllysine; alternate" evidence="1">
    <location>
        <position position="16"/>
    </location>
</feature>
<feature type="modified residue" description="Phosphotyrosine" evidence="3">
    <location>
        <position position="24"/>
    </location>
</feature>
<feature type="modified residue" description="Phosphoserine" evidence="3">
    <location>
        <position position="35"/>
    </location>
</feature>
<feature type="modified residue" description="N6-succinyllysine" evidence="1">
    <location>
        <position position="40"/>
    </location>
</feature>
<feature type="modified residue" description="Phosphoserine" evidence="3">
    <location>
        <position position="49"/>
    </location>
</feature>
<feature type="modified residue" description="Phosphoserine" evidence="1">
    <location>
        <position position="102"/>
    </location>
</feature>
<feature type="modified residue" description="Phosphothreonine" evidence="1">
    <location>
        <position position="108"/>
    </location>
</feature>
<feature type="modified residue" description="Phosphoserine" evidence="1">
    <location>
        <position position="124"/>
    </location>
</feature>
<feature type="modified residue" description="Phosphothreonine" evidence="1">
    <location>
        <position position="134"/>
    </location>
</feature>
<feature type="modified residue" description="Phosphothreonine" evidence="1">
    <location>
        <position position="137"/>
    </location>
</feature>
<feature type="modified residue" description="Phosphoserine" evidence="1">
    <location>
        <position position="138"/>
    </location>
</feature>
<evidence type="ECO:0000250" key="1">
    <source>
        <dbReference type="UniProtKB" id="P01942"/>
    </source>
</evidence>
<evidence type="ECO:0000250" key="2">
    <source>
        <dbReference type="UniProtKB" id="P01946"/>
    </source>
</evidence>
<evidence type="ECO:0000250" key="3">
    <source>
        <dbReference type="UniProtKB" id="P69905"/>
    </source>
</evidence>
<evidence type="ECO:0000255" key="4">
    <source>
        <dbReference type="PROSITE-ProRule" id="PRU00238"/>
    </source>
</evidence>
<sequence length="141" mass="15219">VLSAADKGHVKAIWGKVGGHAGEYAAEGLERTFHSFPTTKTYFPHFDLSHGSAQIQAHGKKIADALGQAVEHIDDLPGTLSKLSDLHAHKLRVDPVNFKLLSHCLLVTFAAHLGDAFTPEVHASLDKFLAAVSTVLTSKYR</sequence>
<organism>
    <name type="scientific">Macropus giganteus</name>
    <name type="common">Eastern gray kangaroo</name>
    <dbReference type="NCBI Taxonomy" id="9317"/>
    <lineage>
        <taxon>Eukaryota</taxon>
        <taxon>Metazoa</taxon>
        <taxon>Chordata</taxon>
        <taxon>Craniata</taxon>
        <taxon>Vertebrata</taxon>
        <taxon>Euteleostomi</taxon>
        <taxon>Mammalia</taxon>
        <taxon>Metatheria</taxon>
        <taxon>Diprotodontia</taxon>
        <taxon>Macropodidae</taxon>
        <taxon>Macropus</taxon>
    </lineage>
</organism>
<gene>
    <name type="primary">HBA</name>
</gene>
<name>HBA_MACGI</name>
<keyword id="KW-0007">Acetylation</keyword>
<keyword id="KW-0903">Direct protein sequencing</keyword>
<keyword id="KW-0349">Heme</keyword>
<keyword id="KW-0408">Iron</keyword>
<keyword id="KW-0479">Metal-binding</keyword>
<keyword id="KW-0561">Oxygen transport</keyword>
<keyword id="KW-0597">Phosphoprotein</keyword>
<keyword id="KW-0813">Transport</keyword>
<protein>
    <recommendedName>
        <fullName>Hemoglobin subunit alpha</fullName>
    </recommendedName>
    <alternativeName>
        <fullName>Alpha-globin</fullName>
    </alternativeName>
    <alternativeName>
        <fullName>Hemoglobin alpha chain</fullName>
    </alternativeName>
    <component>
        <recommendedName>
            <fullName evidence="2">Hemopressin</fullName>
        </recommendedName>
    </component>
</protein>
<accession>P01975</accession>
<dbReference type="PIR" id="A02298">
    <property type="entry name" value="HAKGG"/>
</dbReference>
<dbReference type="SMR" id="P01975"/>
<dbReference type="GO" id="GO:0072562">
    <property type="term" value="C:blood microparticle"/>
    <property type="evidence" value="ECO:0007669"/>
    <property type="project" value="TreeGrafter"/>
</dbReference>
<dbReference type="GO" id="GO:0031838">
    <property type="term" value="C:haptoglobin-hemoglobin complex"/>
    <property type="evidence" value="ECO:0007669"/>
    <property type="project" value="TreeGrafter"/>
</dbReference>
<dbReference type="GO" id="GO:0005833">
    <property type="term" value="C:hemoglobin complex"/>
    <property type="evidence" value="ECO:0007669"/>
    <property type="project" value="InterPro"/>
</dbReference>
<dbReference type="GO" id="GO:0031720">
    <property type="term" value="F:haptoglobin binding"/>
    <property type="evidence" value="ECO:0007669"/>
    <property type="project" value="TreeGrafter"/>
</dbReference>
<dbReference type="GO" id="GO:0020037">
    <property type="term" value="F:heme binding"/>
    <property type="evidence" value="ECO:0007669"/>
    <property type="project" value="InterPro"/>
</dbReference>
<dbReference type="GO" id="GO:0005506">
    <property type="term" value="F:iron ion binding"/>
    <property type="evidence" value="ECO:0007669"/>
    <property type="project" value="InterPro"/>
</dbReference>
<dbReference type="GO" id="GO:0043177">
    <property type="term" value="F:organic acid binding"/>
    <property type="evidence" value="ECO:0007669"/>
    <property type="project" value="TreeGrafter"/>
</dbReference>
<dbReference type="GO" id="GO:0019825">
    <property type="term" value="F:oxygen binding"/>
    <property type="evidence" value="ECO:0007669"/>
    <property type="project" value="InterPro"/>
</dbReference>
<dbReference type="GO" id="GO:0005344">
    <property type="term" value="F:oxygen carrier activity"/>
    <property type="evidence" value="ECO:0007669"/>
    <property type="project" value="UniProtKB-KW"/>
</dbReference>
<dbReference type="GO" id="GO:0004601">
    <property type="term" value="F:peroxidase activity"/>
    <property type="evidence" value="ECO:0007669"/>
    <property type="project" value="TreeGrafter"/>
</dbReference>
<dbReference type="GO" id="GO:0042744">
    <property type="term" value="P:hydrogen peroxide catabolic process"/>
    <property type="evidence" value="ECO:0007669"/>
    <property type="project" value="TreeGrafter"/>
</dbReference>
<dbReference type="CDD" id="cd08927">
    <property type="entry name" value="Hb-alpha-like"/>
    <property type="match status" value="1"/>
</dbReference>
<dbReference type="FunFam" id="1.10.490.10:FF:000002">
    <property type="entry name" value="Hemoglobin subunit alpha"/>
    <property type="match status" value="1"/>
</dbReference>
<dbReference type="Gene3D" id="1.10.490.10">
    <property type="entry name" value="Globins"/>
    <property type="match status" value="1"/>
</dbReference>
<dbReference type="InterPro" id="IPR000971">
    <property type="entry name" value="Globin"/>
</dbReference>
<dbReference type="InterPro" id="IPR009050">
    <property type="entry name" value="Globin-like_sf"/>
</dbReference>
<dbReference type="InterPro" id="IPR012292">
    <property type="entry name" value="Globin/Proto"/>
</dbReference>
<dbReference type="InterPro" id="IPR002338">
    <property type="entry name" value="Hemoglobin_a-typ"/>
</dbReference>
<dbReference type="InterPro" id="IPR050056">
    <property type="entry name" value="Hemoglobin_oxygen_transport"/>
</dbReference>
<dbReference type="InterPro" id="IPR002339">
    <property type="entry name" value="Hemoglobin_pi"/>
</dbReference>
<dbReference type="PANTHER" id="PTHR11442">
    <property type="entry name" value="HEMOGLOBIN FAMILY MEMBER"/>
    <property type="match status" value="1"/>
</dbReference>
<dbReference type="PANTHER" id="PTHR11442:SF48">
    <property type="entry name" value="HEMOGLOBIN SUBUNIT ALPHA"/>
    <property type="match status" value="1"/>
</dbReference>
<dbReference type="Pfam" id="PF00042">
    <property type="entry name" value="Globin"/>
    <property type="match status" value="1"/>
</dbReference>
<dbReference type="PRINTS" id="PR00612">
    <property type="entry name" value="ALPHAHAEM"/>
</dbReference>
<dbReference type="PRINTS" id="PR00815">
    <property type="entry name" value="PIHAEM"/>
</dbReference>
<dbReference type="SUPFAM" id="SSF46458">
    <property type="entry name" value="Globin-like"/>
    <property type="match status" value="1"/>
</dbReference>
<dbReference type="PROSITE" id="PS01033">
    <property type="entry name" value="GLOBIN"/>
    <property type="match status" value="1"/>
</dbReference>
<reference key="1">
    <citation type="journal article" date="1971" name="Aust. J. Biol. Sci.">
        <title>Studies on marsupial proteins. V. Amino acid sequence of the alpha-chain of haemoglobin from the grey kangaroo, Macropus giganteus.</title>
        <authorList>
            <person name="Beard J.M."/>
            <person name="Thompson E.O.P."/>
        </authorList>
    </citation>
    <scope>PROTEIN SEQUENCE</scope>
</reference>